<reference key="1">
    <citation type="journal article" date="2011" name="Stand. Genomic Sci.">
        <title>Complete genome sequence of 'Thioalkalivibrio sulfidophilus' HL-EbGr7.</title>
        <authorList>
            <person name="Muyzer G."/>
            <person name="Sorokin D.Y."/>
            <person name="Mavromatis K."/>
            <person name="Lapidus A."/>
            <person name="Clum A."/>
            <person name="Ivanova N."/>
            <person name="Pati A."/>
            <person name="d'Haeseleer P."/>
            <person name="Woyke T."/>
            <person name="Kyrpides N.C."/>
        </authorList>
    </citation>
    <scope>NUCLEOTIDE SEQUENCE [LARGE SCALE GENOMIC DNA]</scope>
    <source>
        <strain>HL-EbGR7</strain>
    </source>
</reference>
<gene>
    <name evidence="1" type="primary">kdsB</name>
    <name type="ordered locus">Tgr7_1375</name>
</gene>
<proteinExistence type="inferred from homology"/>
<comment type="function">
    <text evidence="1">Activates KDO (a required 8-carbon sugar) for incorporation into bacterial lipopolysaccharide in Gram-negative bacteria.</text>
</comment>
<comment type="catalytic activity">
    <reaction evidence="1">
        <text>3-deoxy-alpha-D-manno-oct-2-ulosonate + CTP = CMP-3-deoxy-beta-D-manno-octulosonate + diphosphate</text>
        <dbReference type="Rhea" id="RHEA:23448"/>
        <dbReference type="ChEBI" id="CHEBI:33019"/>
        <dbReference type="ChEBI" id="CHEBI:37563"/>
        <dbReference type="ChEBI" id="CHEBI:85986"/>
        <dbReference type="ChEBI" id="CHEBI:85987"/>
        <dbReference type="EC" id="2.7.7.38"/>
    </reaction>
</comment>
<comment type="pathway">
    <text evidence="1">Nucleotide-sugar biosynthesis; CMP-3-deoxy-D-manno-octulosonate biosynthesis; CMP-3-deoxy-D-manno-octulosonate from 3-deoxy-D-manno-octulosonate and CTP: step 1/1.</text>
</comment>
<comment type="pathway">
    <text evidence="1">Bacterial outer membrane biogenesis; lipopolysaccharide biosynthesis.</text>
</comment>
<comment type="subcellular location">
    <subcellularLocation>
        <location evidence="1">Cytoplasm</location>
    </subcellularLocation>
</comment>
<comment type="similarity">
    <text evidence="1">Belongs to the KdsB family.</text>
</comment>
<protein>
    <recommendedName>
        <fullName evidence="1">3-deoxy-manno-octulosonate cytidylyltransferase</fullName>
        <ecNumber evidence="1">2.7.7.38</ecNumber>
    </recommendedName>
    <alternativeName>
        <fullName evidence="1">CMP-2-keto-3-deoxyoctulosonic acid synthase</fullName>
        <shortName evidence="1">CKS</shortName>
        <shortName evidence="1">CMP-KDO synthase</shortName>
    </alternativeName>
</protein>
<feature type="chain" id="PRO_1000117807" description="3-deoxy-manno-octulosonate cytidylyltransferase">
    <location>
        <begin position="1"/>
        <end position="250"/>
    </location>
</feature>
<sequence length="250" mass="27358">MSFKVAIPARYASTRLPGKPLLMLGGKPMIQHVHERALACGAEEVVIATDDTRISDVAEGFGARVVLTDAHHESGSDRIAEVATELGWRDDDIVVNLQGDEPLTPPDILHQVAEALERHTDAAMATLCTPIETVEQMLDPNVVKVVRDAADYALYFSRAPIPWDRNVGRDVTHRSLEGCHRHIGLYAYRVGFLKAFAAMSPCALELTERLEQLRALHAGARIQCPVASQVPGQGVDVSSDVERVEKLLRA</sequence>
<keyword id="KW-0963">Cytoplasm</keyword>
<keyword id="KW-0448">Lipopolysaccharide biosynthesis</keyword>
<keyword id="KW-0548">Nucleotidyltransferase</keyword>
<keyword id="KW-1185">Reference proteome</keyword>
<keyword id="KW-0808">Transferase</keyword>
<name>KDSB_THISH</name>
<evidence type="ECO:0000255" key="1">
    <source>
        <dbReference type="HAMAP-Rule" id="MF_00057"/>
    </source>
</evidence>
<organism>
    <name type="scientific">Thioalkalivibrio sulfidiphilus (strain HL-EbGR7)</name>
    <dbReference type="NCBI Taxonomy" id="396588"/>
    <lineage>
        <taxon>Bacteria</taxon>
        <taxon>Pseudomonadati</taxon>
        <taxon>Pseudomonadota</taxon>
        <taxon>Gammaproteobacteria</taxon>
        <taxon>Chromatiales</taxon>
        <taxon>Ectothiorhodospiraceae</taxon>
        <taxon>Thioalkalivibrio</taxon>
    </lineage>
</organism>
<accession>B8GR40</accession>
<dbReference type="EC" id="2.7.7.38" evidence="1"/>
<dbReference type="EMBL" id="CP001339">
    <property type="protein sequence ID" value="ACL72460.1"/>
    <property type="molecule type" value="Genomic_DNA"/>
</dbReference>
<dbReference type="RefSeq" id="WP_012637943.1">
    <property type="nucleotide sequence ID" value="NC_011901.1"/>
</dbReference>
<dbReference type="SMR" id="B8GR40"/>
<dbReference type="STRING" id="396588.Tgr7_1375"/>
<dbReference type="KEGG" id="tgr:Tgr7_1375"/>
<dbReference type="eggNOG" id="COG1212">
    <property type="taxonomic scope" value="Bacteria"/>
</dbReference>
<dbReference type="HOGENOM" id="CLU_065038_1_0_6"/>
<dbReference type="OrthoDB" id="9815559at2"/>
<dbReference type="UniPathway" id="UPA00030"/>
<dbReference type="UniPathway" id="UPA00358">
    <property type="reaction ID" value="UER00476"/>
</dbReference>
<dbReference type="Proteomes" id="UP000002383">
    <property type="component" value="Chromosome"/>
</dbReference>
<dbReference type="GO" id="GO:0005829">
    <property type="term" value="C:cytosol"/>
    <property type="evidence" value="ECO:0007669"/>
    <property type="project" value="TreeGrafter"/>
</dbReference>
<dbReference type="GO" id="GO:0008690">
    <property type="term" value="F:3-deoxy-manno-octulosonate cytidylyltransferase activity"/>
    <property type="evidence" value="ECO:0007669"/>
    <property type="project" value="UniProtKB-UniRule"/>
</dbReference>
<dbReference type="GO" id="GO:0033468">
    <property type="term" value="P:CMP-keto-3-deoxy-D-manno-octulosonic acid biosynthetic process"/>
    <property type="evidence" value="ECO:0007669"/>
    <property type="project" value="UniProtKB-UniRule"/>
</dbReference>
<dbReference type="GO" id="GO:0009103">
    <property type="term" value="P:lipopolysaccharide biosynthetic process"/>
    <property type="evidence" value="ECO:0007669"/>
    <property type="project" value="UniProtKB-UniRule"/>
</dbReference>
<dbReference type="CDD" id="cd02517">
    <property type="entry name" value="CMP-KDO-Synthetase"/>
    <property type="match status" value="1"/>
</dbReference>
<dbReference type="FunFam" id="3.90.550.10:FF:000011">
    <property type="entry name" value="3-deoxy-manno-octulosonate cytidylyltransferase"/>
    <property type="match status" value="1"/>
</dbReference>
<dbReference type="Gene3D" id="3.90.550.10">
    <property type="entry name" value="Spore Coat Polysaccharide Biosynthesis Protein SpsA, Chain A"/>
    <property type="match status" value="1"/>
</dbReference>
<dbReference type="HAMAP" id="MF_00057">
    <property type="entry name" value="KdsB"/>
    <property type="match status" value="1"/>
</dbReference>
<dbReference type="InterPro" id="IPR003329">
    <property type="entry name" value="Cytidylyl_trans"/>
</dbReference>
<dbReference type="InterPro" id="IPR004528">
    <property type="entry name" value="KdsB"/>
</dbReference>
<dbReference type="InterPro" id="IPR029044">
    <property type="entry name" value="Nucleotide-diphossugar_trans"/>
</dbReference>
<dbReference type="NCBIfam" id="TIGR00466">
    <property type="entry name" value="kdsB"/>
    <property type="match status" value="1"/>
</dbReference>
<dbReference type="NCBIfam" id="NF003950">
    <property type="entry name" value="PRK05450.1-3"/>
    <property type="match status" value="1"/>
</dbReference>
<dbReference type="NCBIfam" id="NF003952">
    <property type="entry name" value="PRK05450.1-5"/>
    <property type="match status" value="1"/>
</dbReference>
<dbReference type="NCBIfam" id="NF009905">
    <property type="entry name" value="PRK13368.1"/>
    <property type="match status" value="1"/>
</dbReference>
<dbReference type="PANTHER" id="PTHR42866">
    <property type="entry name" value="3-DEOXY-MANNO-OCTULOSONATE CYTIDYLYLTRANSFERASE"/>
    <property type="match status" value="1"/>
</dbReference>
<dbReference type="PANTHER" id="PTHR42866:SF2">
    <property type="entry name" value="3-DEOXY-MANNO-OCTULOSONATE CYTIDYLYLTRANSFERASE, MITOCHONDRIAL"/>
    <property type="match status" value="1"/>
</dbReference>
<dbReference type="Pfam" id="PF02348">
    <property type="entry name" value="CTP_transf_3"/>
    <property type="match status" value="1"/>
</dbReference>
<dbReference type="SUPFAM" id="SSF53448">
    <property type="entry name" value="Nucleotide-diphospho-sugar transferases"/>
    <property type="match status" value="1"/>
</dbReference>